<comment type="function">
    <text evidence="1">Polymerizes chitin, a structural polymer of the cell wall and septum, by transferring the sugar moiety of UDP-GlcNAc to the non-reducing end of the growing chitin polymer.</text>
</comment>
<comment type="catalytic activity">
    <reaction>
        <text>[(1-&gt;4)-N-acetyl-beta-D-glucosaminyl](n) + UDP-N-acetyl-alpha-D-glucosamine = [(1-&gt;4)-N-acetyl-beta-D-glucosaminyl](n+1) + UDP + H(+)</text>
        <dbReference type="Rhea" id="RHEA:16637"/>
        <dbReference type="Rhea" id="RHEA-COMP:9593"/>
        <dbReference type="Rhea" id="RHEA-COMP:9595"/>
        <dbReference type="ChEBI" id="CHEBI:15378"/>
        <dbReference type="ChEBI" id="CHEBI:17029"/>
        <dbReference type="ChEBI" id="CHEBI:57705"/>
        <dbReference type="ChEBI" id="CHEBI:58223"/>
        <dbReference type="EC" id="2.4.1.16"/>
    </reaction>
</comment>
<comment type="subcellular location">
    <subcellularLocation>
        <location evidence="1">Cell membrane</location>
        <topology evidence="1">Multi-pass membrane protein</topology>
    </subcellularLocation>
</comment>
<comment type="similarity">
    <text evidence="1">Belongs to the chitin synthase family. Class I subfamily.</text>
</comment>
<evidence type="ECO:0000305" key="1"/>
<organism>
    <name type="scientific">Exophiala jeanselmei</name>
    <name type="common">Dematiaceous fungus</name>
    <name type="synonym">Phialophora jeanselmei</name>
    <dbReference type="NCBI Taxonomy" id="5584"/>
    <lineage>
        <taxon>Eukaryota</taxon>
        <taxon>Fungi</taxon>
        <taxon>Dikarya</taxon>
        <taxon>Ascomycota</taxon>
        <taxon>Pezizomycotina</taxon>
        <taxon>Eurotiomycetes</taxon>
        <taxon>Chaetothyriomycetidae</taxon>
        <taxon>Chaetothyriales</taxon>
        <taxon>Herpotrichiellaceae</taxon>
        <taxon>Exophiala</taxon>
    </lineage>
</organism>
<dbReference type="EC" id="2.4.1.16"/>
<dbReference type="EMBL" id="M82944">
    <property type="protein sequence ID" value="AAA33331.1"/>
    <property type="molecule type" value="Genomic_DNA"/>
</dbReference>
<dbReference type="PIR" id="C38192">
    <property type="entry name" value="C38192"/>
</dbReference>
<dbReference type="SMR" id="P30585"/>
<dbReference type="CAZy" id="GT2">
    <property type="family name" value="Glycosyltransferase Family 2"/>
</dbReference>
<dbReference type="GO" id="GO:0030428">
    <property type="term" value="C:cell septum"/>
    <property type="evidence" value="ECO:0007669"/>
    <property type="project" value="TreeGrafter"/>
</dbReference>
<dbReference type="GO" id="GO:0005886">
    <property type="term" value="C:plasma membrane"/>
    <property type="evidence" value="ECO:0007669"/>
    <property type="project" value="UniProtKB-SubCell"/>
</dbReference>
<dbReference type="GO" id="GO:0004100">
    <property type="term" value="F:chitin synthase activity"/>
    <property type="evidence" value="ECO:0007669"/>
    <property type="project" value="UniProtKB-EC"/>
</dbReference>
<dbReference type="GO" id="GO:0071555">
    <property type="term" value="P:cell wall organization"/>
    <property type="evidence" value="ECO:0007669"/>
    <property type="project" value="UniProtKB-KW"/>
</dbReference>
<dbReference type="GO" id="GO:0006031">
    <property type="term" value="P:chitin biosynthetic process"/>
    <property type="evidence" value="ECO:0007669"/>
    <property type="project" value="InterPro"/>
</dbReference>
<dbReference type="InterPro" id="IPR004835">
    <property type="entry name" value="Chitin_synth"/>
</dbReference>
<dbReference type="InterPro" id="IPR004834">
    <property type="entry name" value="Chitin_synth_fun"/>
</dbReference>
<dbReference type="PANTHER" id="PTHR22914">
    <property type="entry name" value="CHITIN SYNTHASE"/>
    <property type="match status" value="1"/>
</dbReference>
<dbReference type="PANTHER" id="PTHR22914:SF9">
    <property type="entry name" value="CHITIN SYNTHASE 1"/>
    <property type="match status" value="1"/>
</dbReference>
<dbReference type="Pfam" id="PF01644">
    <property type="entry name" value="Chitin_synth_1"/>
    <property type="match status" value="1"/>
</dbReference>
<keyword id="KW-1003">Cell membrane</keyword>
<keyword id="KW-0961">Cell wall biogenesis/degradation</keyword>
<keyword id="KW-0328">Glycosyltransferase</keyword>
<keyword id="KW-0472">Membrane</keyword>
<keyword id="KW-0808">Transferase</keyword>
<keyword id="KW-0812">Transmembrane</keyword>
<protein>
    <recommendedName>
        <fullName>Chitin synthase 1</fullName>
        <ecNumber>2.4.1.16</ecNumber>
    </recommendedName>
    <alternativeName>
        <fullName>Chitin-UDP acetyl-glucosaminyl transferase 1</fullName>
    </alternativeName>
    <alternativeName>
        <fullName>Class-I chitin synthase 1</fullName>
    </alternativeName>
</protein>
<feature type="chain" id="PRO_0000193697" description="Chitin synthase 1">
    <location>
        <begin position="1" status="less than"/>
        <end position="189" status="greater than"/>
    </location>
</feature>
<feature type="non-terminal residue">
    <location>
        <position position="1"/>
    </location>
</feature>
<feature type="non-terminal residue">
    <location>
        <position position="189"/>
    </location>
</feature>
<sequence length="189" mass="21207">EFLFARTMIGVFKNIEYMCNRTSSKTWGKEAWKKIVVCIVSDGRAKINPRTRAVLAGLGVYQDGIAKQQVNGKDVTAHIYEYTTQVGLELKGTQGSLKPRSATPVQLLFCLKEKNQKKINSHRWFFQAFGRVLDPNICVLFDAGTKPGKDSIYQLWKAFDLEPMCGGACGEIKVMLDHGKKLYNPLIAT</sequence>
<accession>P30585</accession>
<name>CHS1_EXOJE</name>
<reference key="1">
    <citation type="journal article" date="1992" name="Proc. Natl. Acad. Sci. U.S.A.">
        <title>Classification of fungal chitin synthases.</title>
        <authorList>
            <person name="Bowen A.R."/>
            <person name="Chen-Wu J.L.-P."/>
            <person name="Momany M."/>
            <person name="Young R."/>
            <person name="Szaniszlo P.J."/>
            <person name="Robbins P.W."/>
        </authorList>
    </citation>
    <scope>NUCLEOTIDE SEQUENCE [GENOMIC DNA]</scope>
</reference>
<gene>
    <name type="primary">CHS1</name>
</gene>
<proteinExistence type="inferred from homology"/>